<name>CYB_MARMN</name>
<feature type="chain" id="PRO_0000255069" description="Cytochrome b">
    <location>
        <begin position="1"/>
        <end position="379"/>
    </location>
</feature>
<feature type="transmembrane region" description="Helical" evidence="2">
    <location>
        <begin position="33"/>
        <end position="53"/>
    </location>
</feature>
<feature type="transmembrane region" description="Helical" evidence="2">
    <location>
        <begin position="77"/>
        <end position="98"/>
    </location>
</feature>
<feature type="transmembrane region" description="Helical" evidence="2">
    <location>
        <begin position="113"/>
        <end position="133"/>
    </location>
</feature>
<feature type="transmembrane region" description="Helical" evidence="2">
    <location>
        <begin position="178"/>
        <end position="198"/>
    </location>
</feature>
<feature type="transmembrane region" description="Helical" evidence="2">
    <location>
        <begin position="226"/>
        <end position="246"/>
    </location>
</feature>
<feature type="transmembrane region" description="Helical" evidence="2">
    <location>
        <begin position="288"/>
        <end position="308"/>
    </location>
</feature>
<feature type="transmembrane region" description="Helical" evidence="2">
    <location>
        <begin position="320"/>
        <end position="340"/>
    </location>
</feature>
<feature type="transmembrane region" description="Helical" evidence="2">
    <location>
        <begin position="347"/>
        <end position="367"/>
    </location>
</feature>
<feature type="binding site" description="axial binding residue" evidence="2">
    <location>
        <position position="83"/>
    </location>
    <ligand>
        <name>heme b</name>
        <dbReference type="ChEBI" id="CHEBI:60344"/>
        <label>b562</label>
    </ligand>
    <ligandPart>
        <name>Fe</name>
        <dbReference type="ChEBI" id="CHEBI:18248"/>
    </ligandPart>
</feature>
<feature type="binding site" description="axial binding residue" evidence="2">
    <location>
        <position position="97"/>
    </location>
    <ligand>
        <name>heme b</name>
        <dbReference type="ChEBI" id="CHEBI:60344"/>
        <label>b566</label>
    </ligand>
    <ligandPart>
        <name>Fe</name>
        <dbReference type="ChEBI" id="CHEBI:18248"/>
    </ligandPart>
</feature>
<feature type="binding site" description="axial binding residue" evidence="2">
    <location>
        <position position="182"/>
    </location>
    <ligand>
        <name>heme b</name>
        <dbReference type="ChEBI" id="CHEBI:60344"/>
        <label>b562</label>
    </ligand>
    <ligandPart>
        <name>Fe</name>
        <dbReference type="ChEBI" id="CHEBI:18248"/>
    </ligandPart>
</feature>
<feature type="binding site" description="axial binding residue" evidence="2">
    <location>
        <position position="196"/>
    </location>
    <ligand>
        <name>heme b</name>
        <dbReference type="ChEBI" id="CHEBI:60344"/>
        <label>b566</label>
    </ligand>
    <ligandPart>
        <name>Fe</name>
        <dbReference type="ChEBI" id="CHEBI:18248"/>
    </ligandPart>
</feature>
<feature type="binding site" evidence="2">
    <location>
        <position position="201"/>
    </location>
    <ligand>
        <name>a ubiquinone</name>
        <dbReference type="ChEBI" id="CHEBI:16389"/>
    </ligand>
</feature>
<feature type="sequence conflict" description="In Ref. 2; AAD45204." evidence="5" ref="2">
    <original>KT</original>
    <variation>QN</variation>
    <location>
        <begin position="6"/>
        <end position="7"/>
    </location>
</feature>
<feature type="sequence conflict" description="In Ref. 2; AAD45204." evidence="5" ref="2">
    <original>T</original>
    <variation>S</variation>
    <location>
        <position position="368"/>
    </location>
</feature>
<gene>
    <name type="primary">MT-CYB</name>
    <name type="synonym">COB</name>
    <name type="synonym">CYTB</name>
    <name type="synonym">MTCYB</name>
</gene>
<sequence>MTNTRKTHPLIKIINHSFIDLPAPSNISTWWNFGSLLGLCLVIQIFTGLFLAMHYTSDTMTAFSSVTHICRDVNYGWLIRYMHANGASMFFICLFLHVGRGMYYGSYTYFETWNIGVILLFMVMATAFMGYVLPWGQMSFWGATVITNLLSAIPYIGTTLVEWIWGGFSVDKATLTRFFAFHFILPFITTALVMVHLLFLHETGSNNPSGLISDSDKIPFHPYYTIKDILGALLLILILMILVLFSPDLLGDPDNYTPANPLSTPPHIKPEWYFLFAYAILRSIPNKLGGVLALVFSILILMLFPLLHLSKQRSMMFRPLSQCMFWILVADLITLTWIGGQPVEYPYIIIGQLASILYFAIILLILPTISLIENKLLKW</sequence>
<evidence type="ECO:0000250" key="1"/>
<evidence type="ECO:0000250" key="2">
    <source>
        <dbReference type="UniProtKB" id="P00157"/>
    </source>
</evidence>
<evidence type="ECO:0000255" key="3">
    <source>
        <dbReference type="PROSITE-ProRule" id="PRU00967"/>
    </source>
</evidence>
<evidence type="ECO:0000255" key="4">
    <source>
        <dbReference type="PROSITE-ProRule" id="PRU00968"/>
    </source>
</evidence>
<evidence type="ECO:0000305" key="5"/>
<dbReference type="EMBL" id="AF143931">
    <property type="protein sequence ID" value="AAD29738.1"/>
    <property type="molecule type" value="Genomic_DNA"/>
</dbReference>
<dbReference type="EMBL" id="AF100713">
    <property type="protein sequence ID" value="AAD45204.1"/>
    <property type="molecule type" value="Genomic_DNA"/>
</dbReference>
<dbReference type="SMR" id="Q9TH52"/>
<dbReference type="GO" id="GO:0005743">
    <property type="term" value="C:mitochondrial inner membrane"/>
    <property type="evidence" value="ECO:0007669"/>
    <property type="project" value="UniProtKB-SubCell"/>
</dbReference>
<dbReference type="GO" id="GO:0045275">
    <property type="term" value="C:respiratory chain complex III"/>
    <property type="evidence" value="ECO:0007669"/>
    <property type="project" value="InterPro"/>
</dbReference>
<dbReference type="GO" id="GO:0046872">
    <property type="term" value="F:metal ion binding"/>
    <property type="evidence" value="ECO:0007669"/>
    <property type="project" value="UniProtKB-KW"/>
</dbReference>
<dbReference type="GO" id="GO:0008121">
    <property type="term" value="F:ubiquinol-cytochrome-c reductase activity"/>
    <property type="evidence" value="ECO:0007669"/>
    <property type="project" value="InterPro"/>
</dbReference>
<dbReference type="GO" id="GO:0006122">
    <property type="term" value="P:mitochondrial electron transport, ubiquinol to cytochrome c"/>
    <property type="evidence" value="ECO:0007669"/>
    <property type="project" value="TreeGrafter"/>
</dbReference>
<dbReference type="CDD" id="cd00290">
    <property type="entry name" value="cytochrome_b_C"/>
    <property type="match status" value="1"/>
</dbReference>
<dbReference type="CDD" id="cd00284">
    <property type="entry name" value="Cytochrome_b_N"/>
    <property type="match status" value="1"/>
</dbReference>
<dbReference type="FunFam" id="1.20.810.10:FF:000002">
    <property type="entry name" value="Cytochrome b"/>
    <property type="match status" value="1"/>
</dbReference>
<dbReference type="Gene3D" id="1.20.810.10">
    <property type="entry name" value="Cytochrome Bc1 Complex, Chain C"/>
    <property type="match status" value="1"/>
</dbReference>
<dbReference type="InterPro" id="IPR005798">
    <property type="entry name" value="Cyt_b/b6_C"/>
</dbReference>
<dbReference type="InterPro" id="IPR036150">
    <property type="entry name" value="Cyt_b/b6_C_sf"/>
</dbReference>
<dbReference type="InterPro" id="IPR005797">
    <property type="entry name" value="Cyt_b/b6_N"/>
</dbReference>
<dbReference type="InterPro" id="IPR027387">
    <property type="entry name" value="Cytb/b6-like_sf"/>
</dbReference>
<dbReference type="InterPro" id="IPR030689">
    <property type="entry name" value="Cytochrome_b"/>
</dbReference>
<dbReference type="InterPro" id="IPR048260">
    <property type="entry name" value="Cytochrome_b_C_euk/bac"/>
</dbReference>
<dbReference type="InterPro" id="IPR048259">
    <property type="entry name" value="Cytochrome_b_N_euk/bac"/>
</dbReference>
<dbReference type="InterPro" id="IPR016174">
    <property type="entry name" value="Di-haem_cyt_TM"/>
</dbReference>
<dbReference type="PANTHER" id="PTHR19271">
    <property type="entry name" value="CYTOCHROME B"/>
    <property type="match status" value="1"/>
</dbReference>
<dbReference type="PANTHER" id="PTHR19271:SF16">
    <property type="entry name" value="CYTOCHROME B"/>
    <property type="match status" value="1"/>
</dbReference>
<dbReference type="Pfam" id="PF00032">
    <property type="entry name" value="Cytochrom_B_C"/>
    <property type="match status" value="1"/>
</dbReference>
<dbReference type="Pfam" id="PF00033">
    <property type="entry name" value="Cytochrome_B"/>
    <property type="match status" value="1"/>
</dbReference>
<dbReference type="PIRSF" id="PIRSF038885">
    <property type="entry name" value="COB"/>
    <property type="match status" value="1"/>
</dbReference>
<dbReference type="SUPFAM" id="SSF81648">
    <property type="entry name" value="a domain/subunit of cytochrome bc1 complex (Ubiquinol-cytochrome c reductase)"/>
    <property type="match status" value="1"/>
</dbReference>
<dbReference type="SUPFAM" id="SSF81342">
    <property type="entry name" value="Transmembrane di-heme cytochromes"/>
    <property type="match status" value="1"/>
</dbReference>
<dbReference type="PROSITE" id="PS51003">
    <property type="entry name" value="CYTB_CTER"/>
    <property type="match status" value="1"/>
</dbReference>
<dbReference type="PROSITE" id="PS51002">
    <property type="entry name" value="CYTB_NTER"/>
    <property type="match status" value="1"/>
</dbReference>
<geneLocation type="mitochondrion"/>
<proteinExistence type="inferred from homology"/>
<reference key="1">
    <citation type="journal article" date="1999" name="Syst. Biol.">
        <title>Molecular phylogeny of the marmots (Rodentia: Sciuridae): tests of evolutionary and biogeographic hypotheses.</title>
        <authorList>
            <person name="Steppan S.J."/>
            <person name="Akhverdyan M.R."/>
            <person name="Lyapunova E.A."/>
            <person name="Fraser D.G."/>
            <person name="Vorontsov N.N."/>
            <person name="Hoffmann R.S."/>
            <person name="Braun M.J."/>
        </authorList>
    </citation>
    <scope>NUCLEOTIDE SEQUENCE [GENOMIC DNA]</scope>
</reference>
<reference key="2">
    <citation type="journal article" date="1999" name="J. Zool. Syst. Evol. Res.">
        <title>Marmot phylogeny revisited: molecular evidence for a diphyletic origin of sociality.</title>
        <authorList>
            <person name="Kruckenhauser L."/>
            <person name="Pinsker W."/>
            <person name="Haring E."/>
            <person name="Arnold W."/>
        </authorList>
    </citation>
    <scope>NUCLEOTIDE SEQUENCE [GENOMIC DNA]</scope>
</reference>
<keyword id="KW-0249">Electron transport</keyword>
<keyword id="KW-0349">Heme</keyword>
<keyword id="KW-0408">Iron</keyword>
<keyword id="KW-0472">Membrane</keyword>
<keyword id="KW-0479">Metal-binding</keyword>
<keyword id="KW-0496">Mitochondrion</keyword>
<keyword id="KW-0999">Mitochondrion inner membrane</keyword>
<keyword id="KW-0679">Respiratory chain</keyword>
<keyword id="KW-0812">Transmembrane</keyword>
<keyword id="KW-1133">Transmembrane helix</keyword>
<keyword id="KW-0813">Transport</keyword>
<keyword id="KW-0830">Ubiquinone</keyword>
<organism>
    <name type="scientific">Marmota menzbieri</name>
    <name type="common">Menzbier's marmot</name>
    <dbReference type="NCBI Taxonomy" id="93164"/>
    <lineage>
        <taxon>Eukaryota</taxon>
        <taxon>Metazoa</taxon>
        <taxon>Chordata</taxon>
        <taxon>Craniata</taxon>
        <taxon>Vertebrata</taxon>
        <taxon>Euteleostomi</taxon>
        <taxon>Mammalia</taxon>
        <taxon>Eutheria</taxon>
        <taxon>Euarchontoglires</taxon>
        <taxon>Glires</taxon>
        <taxon>Rodentia</taxon>
        <taxon>Sciuromorpha</taxon>
        <taxon>Sciuridae</taxon>
        <taxon>Xerinae</taxon>
        <taxon>Marmotini</taxon>
        <taxon>Marmota</taxon>
    </lineage>
</organism>
<comment type="function">
    <text evidence="2">Component of the ubiquinol-cytochrome c reductase complex (complex III or cytochrome b-c1 complex) that is part of the mitochondrial respiratory chain. The b-c1 complex mediates electron transfer from ubiquinol to cytochrome c. Contributes to the generation of a proton gradient across the mitochondrial membrane that is then used for ATP synthesis.</text>
</comment>
<comment type="cofactor">
    <cofactor evidence="2">
        <name>heme b</name>
        <dbReference type="ChEBI" id="CHEBI:60344"/>
    </cofactor>
    <text evidence="2">Binds 2 heme b groups non-covalently.</text>
</comment>
<comment type="subunit">
    <text evidence="2">The cytochrome bc1 complex contains 11 subunits: 3 respiratory subunits (MT-CYB, CYC1 and UQCRFS1), 2 core proteins (UQCRC1 and UQCRC2) and 6 low-molecular weight proteins (UQCRH/QCR6, UQCRB/QCR7, UQCRQ/QCR8, UQCR10/QCR9, UQCR11/QCR10 and a cleavage product of UQCRFS1). This cytochrome bc1 complex then forms a dimer.</text>
</comment>
<comment type="subcellular location">
    <subcellularLocation>
        <location evidence="2">Mitochondrion inner membrane</location>
        <topology evidence="2">Multi-pass membrane protein</topology>
    </subcellularLocation>
</comment>
<comment type="miscellaneous">
    <text evidence="1">Heme 1 (or BL or b562) is low-potential and absorbs at about 562 nm, and heme 2 (or BH or b566) is high-potential and absorbs at about 566 nm.</text>
</comment>
<comment type="similarity">
    <text evidence="3 4">Belongs to the cytochrome b family.</text>
</comment>
<comment type="caution">
    <text evidence="2">The full-length protein contains only eight transmembrane helices, not nine as predicted by bioinformatics tools.</text>
</comment>
<protein>
    <recommendedName>
        <fullName>Cytochrome b</fullName>
    </recommendedName>
    <alternativeName>
        <fullName>Complex III subunit 3</fullName>
    </alternativeName>
    <alternativeName>
        <fullName>Complex III subunit III</fullName>
    </alternativeName>
    <alternativeName>
        <fullName>Cytochrome b-c1 complex subunit 3</fullName>
    </alternativeName>
    <alternativeName>
        <fullName>Ubiquinol-cytochrome-c reductase complex cytochrome b subunit</fullName>
    </alternativeName>
</protein>
<accession>Q9TH52</accession>
<accession>Q9XP32</accession>